<organism>
    <name type="scientific">Bos taurus</name>
    <name type="common">Bovine</name>
    <dbReference type="NCBI Taxonomy" id="9913"/>
    <lineage>
        <taxon>Eukaryota</taxon>
        <taxon>Metazoa</taxon>
        <taxon>Chordata</taxon>
        <taxon>Craniata</taxon>
        <taxon>Vertebrata</taxon>
        <taxon>Euteleostomi</taxon>
        <taxon>Mammalia</taxon>
        <taxon>Eutheria</taxon>
        <taxon>Laurasiatheria</taxon>
        <taxon>Artiodactyla</taxon>
        <taxon>Ruminantia</taxon>
        <taxon>Pecora</taxon>
        <taxon>Bovidae</taxon>
        <taxon>Bovinae</taxon>
        <taxon>Bos</taxon>
    </lineage>
</organism>
<evidence type="ECO:0000250" key="1">
    <source>
        <dbReference type="UniProtKB" id="A1E295"/>
    </source>
</evidence>
<evidence type="ECO:0000250" key="2">
    <source>
        <dbReference type="UniProtKB" id="P07858"/>
    </source>
</evidence>
<evidence type="ECO:0000250" key="3">
    <source>
        <dbReference type="UniProtKB" id="P10605"/>
    </source>
</evidence>
<evidence type="ECO:0000255" key="4"/>
<evidence type="ECO:0000255" key="5">
    <source>
        <dbReference type="PROSITE-ProRule" id="PRU10088"/>
    </source>
</evidence>
<evidence type="ECO:0000255" key="6">
    <source>
        <dbReference type="PROSITE-ProRule" id="PRU10089"/>
    </source>
</evidence>
<evidence type="ECO:0000255" key="7">
    <source>
        <dbReference type="PROSITE-ProRule" id="PRU10090"/>
    </source>
</evidence>
<evidence type="ECO:0000269" key="8">
    <source>
    </source>
</evidence>
<evidence type="ECO:0000269" key="9">
    <source>
    </source>
</evidence>
<evidence type="ECO:0000269" key="10">
    <source>
    </source>
</evidence>
<evidence type="ECO:0000269" key="11">
    <source>
    </source>
</evidence>
<evidence type="ECO:0000269" key="12">
    <source>
    </source>
</evidence>
<evidence type="ECO:0000269" key="13">
    <source>
    </source>
</evidence>
<evidence type="ECO:0000303" key="14">
    <source>
    </source>
</evidence>
<evidence type="ECO:0000303" key="15">
    <source>
    </source>
</evidence>
<evidence type="ECO:0000303" key="16">
    <source>
    </source>
</evidence>
<evidence type="ECO:0000305" key="17"/>
<evidence type="ECO:0007829" key="18">
    <source>
        <dbReference type="PDB" id="1QDQ"/>
    </source>
</evidence>
<evidence type="ECO:0007829" key="19">
    <source>
        <dbReference type="PDB" id="2DC7"/>
    </source>
</evidence>
<evidence type="ECO:0007829" key="20">
    <source>
        <dbReference type="PDB" id="2DCC"/>
    </source>
</evidence>
<keyword id="KW-0002">3D-structure</keyword>
<keyword id="KW-0007">Acetylation</keyword>
<keyword id="KW-1003">Cell membrane</keyword>
<keyword id="KW-0903">Direct protein sequencing</keyword>
<keyword id="KW-1015">Disulfide bond</keyword>
<keyword id="KW-0325">Glycoprotein</keyword>
<keyword id="KW-0378">Hydrolase</keyword>
<keyword id="KW-0458">Lysosome</keyword>
<keyword id="KW-0472">Membrane</keyword>
<keyword id="KW-0645">Protease</keyword>
<keyword id="KW-1185">Reference proteome</keyword>
<keyword id="KW-0964">Secreted</keyword>
<keyword id="KW-0732">Signal</keyword>
<keyword id="KW-0788">Thiol protease</keyword>
<keyword id="KW-0865">Zymogen</keyword>
<proteinExistence type="evidence at protein level"/>
<reference key="1">
    <citation type="journal article" date="1991" name="J. Biol. Chem.">
        <title>Expression of lysosomal cathepsin B during calf myoblast-myotube differentiation. Characterization of a cDNA encoding bovine cathepsin B.</title>
        <authorList>
            <person name="Bechet D.M."/>
            <person name="Ferrara M.J."/>
            <person name="Mordier S.B."/>
            <person name="Roux M.-P."/>
            <person name="Deval C."/>
            <person name="Obled A."/>
        </authorList>
    </citation>
    <scope>NUCLEOTIDE SEQUENCE [MRNA]</scope>
    <scope>FUNCTION</scope>
    <scope>CATALYTIC ACTIVITY</scope>
    <scope>SUBCELLULAR LOCATION</scope>
    <scope>TISSUE SPECIFICITY</scope>
</reference>
<reference key="2">
    <citation type="journal article" date="1993" name="Biochim. Biophys. Acta">
        <title>Nucleotide sequence of bovine preprocathepsin B. A study of polymorphism in the protein coding region.</title>
        <authorList>
            <person name="Mordier S."/>
            <person name="Bechet D."/>
            <person name="Roux M.-P."/>
            <person name="Obled A."/>
            <person name="Ferrara M."/>
        </authorList>
    </citation>
    <scope>NUCLEOTIDE SEQUENCE [GENOMIC DNA]</scope>
    <source>
        <tissue>Spleen</tissue>
    </source>
</reference>
<reference key="3">
    <citation type="submission" date="2005-08" db="EMBL/GenBank/DDBJ databases">
        <authorList>
            <consortium name="NIH - Mammalian Gene Collection (MGC) project"/>
        </authorList>
    </citation>
    <scope>NUCLEOTIDE SEQUENCE [LARGE SCALE MRNA]</scope>
    <source>
        <strain>Hereford</strain>
        <tissue>Thymus</tissue>
    </source>
</reference>
<reference key="4">
    <citation type="journal article" date="1988" name="J. Biol. Chem.">
        <title>Amino acid sequence of bovine spleen cathepsin B.</title>
        <authorList>
            <person name="Meloun B."/>
            <person name="Baudys M."/>
            <person name="Pohl J."/>
            <person name="Pavlik M."/>
            <person name="Kostka V."/>
        </authorList>
    </citation>
    <scope>PROTEIN SEQUENCE OF 80-332</scope>
    <scope>GLYCOSYLATION AT ASN-192</scope>
    <scope>TISSUE SPECIFICITY</scope>
    <source>
        <tissue>Spleen</tissue>
    </source>
</reference>
<reference key="5">
    <citation type="book" date="1986" name="Cysteine proteinases and their inhibitors">
        <title>Tentative amino acid sequence of bovine spleen cathepsin B.</title>
        <editorList>
            <person name="Turk V."/>
        </editorList>
        <authorList>
            <person name="Meloun B."/>
            <person name="Pohl J."/>
            <person name="Kostka V."/>
        </authorList>
    </citation>
    <scope>PRELIMINARY PROTEIN SEQUENCE OF 80-332</scope>
    <source>
        <tissue>Spleen</tissue>
    </source>
</reference>
<reference key="6">
    <citation type="journal article" date="1982" name="FEBS Lett.">
        <title>Identification of the active site cysteine and of the disulfide bonds in the N-terminal part of the molecule of bovine spleen cathepsin B.</title>
        <authorList>
            <person name="Pohl J."/>
            <person name="Baudys M."/>
            <person name="Tomasek V."/>
            <person name="Kostka V."/>
        </authorList>
    </citation>
    <scope>PROTEIN SEQUENCE OF 80-126</scope>
    <scope>DISULFIDE BONDS</scope>
    <scope>ACTIVE SITE</scope>
    <source>
        <tissue>Spleen</tissue>
    </source>
</reference>
<reference key="7">
    <citation type="journal article" date="1988" name="Biol. Chem. Hoppe-Seyler">
        <title>Identification of the second (buried) cysteine residue and of the C-terminal disulfide bridge of bovine spleen cathepsin B.</title>
        <authorList>
            <person name="Baudys M."/>
            <person name="Meloun B."/>
            <person name="Pohl J."/>
            <person name="Kostka V."/>
        </authorList>
    </citation>
    <scope>PROTEIN SEQUENCE OF 224-237 AND 310-332</scope>
    <scope>DISULFIDE BONDS</scope>
    <source>
        <tissue>Spleen</tissue>
    </source>
</reference>
<reference key="8">
    <citation type="journal article" date="1990" name="Biol. Chem. Hoppe-Seyler">
        <title>Disulfide bridges of bovine spleen cathepsin B.</title>
        <authorList>
            <person name="Baudys M."/>
            <person name="Meloun B."/>
            <person name="Gan-Erdene T."/>
            <person name="Pohl J."/>
            <person name="Kostka V."/>
        </authorList>
    </citation>
    <scope>DISULFIDE BONDS</scope>
</reference>
<reference key="9">
    <citation type="journal article" date="2000" name="J. Biochem.">
        <title>Substrate specificity of bovine cathepsin B and its inhibition by CA074, based on crystal structure refinement of the complex.</title>
        <authorList>
            <person name="Yamamoto A."/>
            <person name="Tomoo K."/>
            <person name="Hara T."/>
            <person name="Murata M."/>
            <person name="Kitamura K."/>
            <person name="Ishida T."/>
        </authorList>
    </citation>
    <scope>X-RAY CRYSTALLOGRAPHY (2.18 ANGSTROMS) OF 80-332</scope>
    <scope>DISULFIDE BONDS</scope>
    <scope>ACTIVE SITE</scope>
</reference>
<protein>
    <recommendedName>
        <fullName>Cathepsin B</fullName>
        <ecNumber evidence="9">3.4.22.1</ecNumber>
    </recommendedName>
    <alternativeName>
        <fullName>BCSB</fullName>
    </alternativeName>
    <component>
        <recommendedName>
            <fullName evidence="15 16">Cathepsin B light chain</fullName>
        </recommendedName>
    </component>
    <component>
        <recommendedName>
            <fullName evidence="14 15">Cathepsin B heavy chain</fullName>
        </recommendedName>
    </component>
</protein>
<comment type="function">
    <text evidence="2 3 9">Thiol protease which is believed to participate in intracellular degradation and turnover of proteins (PubMed:1856234). Cleaves matrix extracellular phosphoglycoprotein MEPE (By similarity). Involved in the solubilization of cross-linked TG/thyroglobulin in the thyroid follicle lumen (By similarity). Has also been implicated in tumor invasion and metastasis (By similarity).</text>
</comment>
<comment type="catalytic activity">
    <reaction evidence="9">
        <text>Hydrolysis of proteins with broad specificity for peptide bonds. Preferentially cleaves -Arg-Arg-|-Xaa bonds in small molecule substrates (thus differing from cathepsin L). In addition to being an endopeptidase, shows peptidyl-dipeptidase activity, liberating C-terminal dipeptides.</text>
        <dbReference type="EC" id="3.4.22.1"/>
    </reaction>
</comment>
<comment type="subunit">
    <text evidence="2">Dimer of a heavy chain and a light chain cross-linked by a disulfide bond. Interacts with SRPX2. Directly interacts with SHKBP1.</text>
</comment>
<comment type="subcellular location">
    <subcellularLocation>
        <location evidence="9">Lysosome</location>
    </subcellularLocation>
    <subcellularLocation>
        <location evidence="2">Melanosome</location>
    </subcellularLocation>
    <subcellularLocation>
        <location evidence="1">Secreted</location>
        <location evidence="1">Extracellular space</location>
    </subcellularLocation>
    <subcellularLocation>
        <location evidence="3">Apical cell membrane</location>
        <topology evidence="3">Peripheral membrane protein</topology>
        <orientation evidence="3">Extracellular side</orientation>
    </subcellularLocation>
    <text evidence="3">Localizes to the lumen of thyroid follicles and to the apical membrane of thyroid epithelial cells.</text>
</comment>
<comment type="tissue specificity">
    <text evidence="9 12">Expressed in myoblasts, the myotube, fibroblasts and fetal muscle (at protein level) (PubMed:1856234). Expressed in the spleen (at protein level) (PubMed:3379063).</text>
</comment>
<comment type="similarity">
    <text evidence="5 6 7">Belongs to the peptidase C1 family.</text>
</comment>
<gene>
    <name type="primary">CTSB</name>
</gene>
<feature type="signal peptide" evidence="4">
    <location>
        <begin position="1"/>
        <end position="17"/>
    </location>
</feature>
<feature type="propeptide" id="PRO_0000026138" description="Activation peptide">
    <location>
        <begin position="18"/>
        <end position="79"/>
    </location>
</feature>
<feature type="chain" id="PRO_0000026139" description="Cathepsin B" evidence="12">
    <location>
        <begin position="80"/>
        <end position="332"/>
    </location>
</feature>
<feature type="chain" id="PRO_0000026140" description="Cathepsin B light chain" evidence="12 13">
    <location>
        <begin position="80"/>
        <end position="126"/>
    </location>
</feature>
<feature type="chain" id="PRO_0000026141" description="Cathepsin B heavy chain" evidence="11 12">
    <location>
        <begin position="129"/>
        <end position="332"/>
    </location>
</feature>
<feature type="propeptide" id="PRO_0000026142" evidence="2">
    <location>
        <begin position="333"/>
        <end position="335"/>
    </location>
</feature>
<feature type="active site" evidence="5 8 13">
    <location>
        <position position="108"/>
    </location>
</feature>
<feature type="active site" evidence="6 8">
    <location>
        <position position="278"/>
    </location>
</feature>
<feature type="active site" evidence="7 8">
    <location>
        <position position="298"/>
    </location>
</feature>
<feature type="modified residue" description="N6-acetyllysine" evidence="3">
    <location>
        <position position="220"/>
    </location>
</feature>
<feature type="glycosylation site" description="N-linked (GlcNAc...) asparagine" evidence="12">
    <location>
        <position position="192"/>
    </location>
</feature>
<feature type="disulfide bond" evidence="8 10 13">
    <location>
        <begin position="93"/>
        <end position="122"/>
    </location>
</feature>
<feature type="disulfide bond" evidence="8 10 13">
    <location>
        <begin position="105"/>
        <end position="150"/>
    </location>
</feature>
<feature type="disulfide bond" evidence="8 10">
    <location>
        <begin position="141"/>
        <end position="207"/>
    </location>
</feature>
<feature type="disulfide bond" evidence="8 10">
    <location>
        <begin position="142"/>
        <end position="146"/>
    </location>
</feature>
<feature type="disulfide bond" evidence="8 10">
    <location>
        <begin position="179"/>
        <end position="211"/>
    </location>
</feature>
<feature type="disulfide bond" evidence="8 10">
    <location>
        <begin position="187"/>
        <end position="198"/>
    </location>
</feature>
<feature type="disulfide bond" evidence="8 10 11">
    <location>
        <begin position="227"/>
        <end position="331"/>
    </location>
</feature>
<feature type="sequence conflict" description="In Ref. 3; AAI02998." evidence="17" ref="3">
    <original>G</original>
    <variation>D</variation>
    <location>
        <position position="143"/>
    </location>
</feature>
<feature type="sequence conflict" description="In Ref. 4; AA sequence." evidence="17" ref="4">
    <original>F</original>
    <variation>E</variation>
    <location>
        <position position="154"/>
    </location>
</feature>
<feature type="sequence conflict" description="In Ref. 4; AA sequence." evidence="17" ref="4">
    <original>S</original>
    <variation>N</variation>
    <location>
        <position position="208"/>
    </location>
</feature>
<feature type="sequence conflict" description="In Ref. 4; AA sequence." evidence="17" ref="4">
    <original>G</original>
    <variation>A</variation>
    <location>
        <position position="297"/>
    </location>
</feature>
<feature type="helix" evidence="20">
    <location>
        <begin position="86"/>
        <end position="89"/>
    </location>
</feature>
<feature type="helix" evidence="20">
    <location>
        <begin position="94"/>
        <end position="97"/>
    </location>
</feature>
<feature type="strand" evidence="19">
    <location>
        <begin position="104"/>
        <end position="106"/>
    </location>
</feature>
<feature type="helix" evidence="20">
    <location>
        <begin position="108"/>
        <end position="123"/>
    </location>
</feature>
<feature type="helix" evidence="20">
    <location>
        <begin position="135"/>
        <end position="141"/>
    </location>
</feature>
<feature type="helix" evidence="20">
    <location>
        <begin position="143"/>
        <end position="146"/>
    </location>
</feature>
<feature type="helix" evidence="20">
    <location>
        <begin position="149"/>
        <end position="151"/>
    </location>
</feature>
<feature type="helix" evidence="20">
    <location>
        <begin position="155"/>
        <end position="164"/>
    </location>
</feature>
<feature type="strand" evidence="20">
    <location>
        <begin position="178"/>
        <end position="180"/>
    </location>
</feature>
<feature type="strand" evidence="20">
    <location>
        <begin position="188"/>
        <end position="191"/>
    </location>
</feature>
<feature type="strand" evidence="18">
    <location>
        <begin position="193"/>
        <end position="195"/>
    </location>
</feature>
<feature type="helix" evidence="20">
    <location>
        <begin position="220"/>
        <end position="222"/>
    </location>
</feature>
<feature type="strand" evidence="20">
    <location>
        <begin position="226"/>
        <end position="232"/>
    </location>
</feature>
<feature type="helix" evidence="20">
    <location>
        <begin position="236"/>
        <end position="246"/>
    </location>
</feature>
<feature type="strand" evidence="20">
    <location>
        <begin position="249"/>
        <end position="256"/>
    </location>
</feature>
<feature type="helix" evidence="20">
    <location>
        <begin position="257"/>
        <end position="260"/>
    </location>
</feature>
<feature type="strand" evidence="20">
    <location>
        <begin position="264"/>
        <end position="267"/>
    </location>
</feature>
<feature type="strand" evidence="20">
    <location>
        <begin position="274"/>
        <end position="288"/>
    </location>
</feature>
<feature type="strand" evidence="20">
    <location>
        <begin position="291"/>
        <end position="297"/>
    </location>
</feature>
<feature type="strand" evidence="20">
    <location>
        <begin position="309"/>
        <end position="313"/>
    </location>
</feature>
<feature type="helix" evidence="20">
    <location>
        <begin position="318"/>
        <end position="320"/>
    </location>
</feature>
<feature type="turn" evidence="20">
    <location>
        <begin position="321"/>
        <end position="323"/>
    </location>
</feature>
<feature type="strand" evidence="20">
    <location>
        <begin position="324"/>
        <end position="330"/>
    </location>
</feature>
<dbReference type="EC" id="3.4.22.1" evidence="9"/>
<dbReference type="EMBL" id="L06075">
    <property type="protein sequence ID" value="AAA03064.1"/>
    <property type="molecule type" value="mRNA"/>
</dbReference>
<dbReference type="EMBL" id="M64620">
    <property type="protein sequence ID" value="AAA30434.1"/>
    <property type="molecule type" value="mRNA"/>
</dbReference>
<dbReference type="EMBL" id="U16336">
    <property type="protein sequence ID" value="AAA80198.1"/>
    <property type="molecule type" value="Genomic_DNA"/>
</dbReference>
<dbReference type="EMBL" id="U16337">
    <property type="protein sequence ID" value="AAA80198.1"/>
    <property type="status" value="JOINED"/>
    <property type="molecule type" value="Genomic_DNA"/>
</dbReference>
<dbReference type="EMBL" id="U16338">
    <property type="protein sequence ID" value="AAA80198.1"/>
    <property type="status" value="JOINED"/>
    <property type="molecule type" value="Genomic_DNA"/>
</dbReference>
<dbReference type="EMBL" id="U16339">
    <property type="protein sequence ID" value="AAA80198.1"/>
    <property type="status" value="JOINED"/>
    <property type="molecule type" value="Genomic_DNA"/>
</dbReference>
<dbReference type="EMBL" id="U16341">
    <property type="protein sequence ID" value="AAA80198.1"/>
    <property type="status" value="JOINED"/>
    <property type="molecule type" value="Genomic_DNA"/>
</dbReference>
<dbReference type="EMBL" id="U16342">
    <property type="protein sequence ID" value="AAA80198.1"/>
    <property type="status" value="JOINED"/>
    <property type="molecule type" value="Genomic_DNA"/>
</dbReference>
<dbReference type="EMBL" id="U16343">
    <property type="protein sequence ID" value="AAA80198.1"/>
    <property type="status" value="JOINED"/>
    <property type="molecule type" value="Genomic_DNA"/>
</dbReference>
<dbReference type="EMBL" id="BC102997">
    <property type="protein sequence ID" value="AAI02998.1"/>
    <property type="molecule type" value="mRNA"/>
</dbReference>
<dbReference type="PIR" id="S38328">
    <property type="entry name" value="KHBOB"/>
</dbReference>
<dbReference type="RefSeq" id="NP_776456.1">
    <property type="nucleotide sequence ID" value="NM_174031.2"/>
</dbReference>
<dbReference type="RefSeq" id="XP_005209879.1">
    <property type="nucleotide sequence ID" value="XM_005209822.5"/>
</dbReference>
<dbReference type="RefSeq" id="XP_010805998.1">
    <property type="nucleotide sequence ID" value="XM_010807696.2"/>
</dbReference>
<dbReference type="RefSeq" id="XP_059744925.1">
    <property type="nucleotide sequence ID" value="XM_059888942.1"/>
</dbReference>
<dbReference type="PDB" id="1ITO">
    <property type="method" value="X-ray"/>
    <property type="resolution" value="2.29 A"/>
    <property type="chains" value="A=80-335"/>
</dbReference>
<dbReference type="PDB" id="1QDQ">
    <property type="method" value="X-ray"/>
    <property type="resolution" value="2.18 A"/>
    <property type="chains" value="A=80-332"/>
</dbReference>
<dbReference type="PDB" id="1SP4">
    <property type="method" value="X-ray"/>
    <property type="resolution" value="2.20 A"/>
    <property type="chains" value="A=80-127, B=128-332"/>
</dbReference>
<dbReference type="PDB" id="2DC6">
    <property type="method" value="X-ray"/>
    <property type="resolution" value="2.30 A"/>
    <property type="chains" value="A=80-335"/>
</dbReference>
<dbReference type="PDB" id="2DC7">
    <property type="method" value="X-ray"/>
    <property type="resolution" value="1.94 A"/>
    <property type="chains" value="A=80-335"/>
</dbReference>
<dbReference type="PDB" id="2DC8">
    <property type="method" value="X-ray"/>
    <property type="resolution" value="1.94 A"/>
    <property type="chains" value="A=80-335"/>
</dbReference>
<dbReference type="PDB" id="2DC9">
    <property type="method" value="X-ray"/>
    <property type="resolution" value="1.94 A"/>
    <property type="chains" value="A=80-335"/>
</dbReference>
<dbReference type="PDB" id="2DCA">
    <property type="method" value="X-ray"/>
    <property type="resolution" value="2.11 A"/>
    <property type="chains" value="A=80-335"/>
</dbReference>
<dbReference type="PDB" id="2DCB">
    <property type="method" value="X-ray"/>
    <property type="resolution" value="1.94 A"/>
    <property type="chains" value="A=80-335"/>
</dbReference>
<dbReference type="PDB" id="2DCC">
    <property type="method" value="X-ray"/>
    <property type="resolution" value="1.93 A"/>
    <property type="chains" value="A=80-335"/>
</dbReference>
<dbReference type="PDB" id="2DCD">
    <property type="method" value="X-ray"/>
    <property type="resolution" value="2.50 A"/>
    <property type="chains" value="A=80-335"/>
</dbReference>
<dbReference type="PDBsum" id="1ITO"/>
<dbReference type="PDBsum" id="1QDQ"/>
<dbReference type="PDBsum" id="1SP4"/>
<dbReference type="PDBsum" id="2DC6"/>
<dbReference type="PDBsum" id="2DC7"/>
<dbReference type="PDBsum" id="2DC8"/>
<dbReference type="PDBsum" id="2DC9"/>
<dbReference type="PDBsum" id="2DCA"/>
<dbReference type="PDBsum" id="2DCB"/>
<dbReference type="PDBsum" id="2DCC"/>
<dbReference type="PDBsum" id="2DCD"/>
<dbReference type="SMR" id="P07688"/>
<dbReference type="BioGRID" id="158468">
    <property type="interactions" value="1"/>
</dbReference>
<dbReference type="FunCoup" id="P07688">
    <property type="interactions" value="2020"/>
</dbReference>
<dbReference type="STRING" id="9913.ENSBTAP00000036650"/>
<dbReference type="BindingDB" id="P07688"/>
<dbReference type="ChEMBL" id="CHEMBL2323"/>
<dbReference type="MEROPS" id="C01.060"/>
<dbReference type="CarbonylDB" id="P07688"/>
<dbReference type="GlyCosmos" id="P07688">
    <property type="glycosylation" value="1 site, No reported glycans"/>
</dbReference>
<dbReference type="GlyGen" id="P07688">
    <property type="glycosylation" value="1 site"/>
</dbReference>
<dbReference type="iPTMnet" id="P07688"/>
<dbReference type="PaxDb" id="9913-ENSBTAP00000036650"/>
<dbReference type="PeptideAtlas" id="P07688"/>
<dbReference type="Ensembl" id="ENSBTAT00000036795.6">
    <property type="protein sequence ID" value="ENSBTAP00000036650.4"/>
    <property type="gene ID" value="ENSBTAG00000012442.7"/>
</dbReference>
<dbReference type="GeneID" id="281105"/>
<dbReference type="KEGG" id="bta:281105"/>
<dbReference type="CTD" id="1508"/>
<dbReference type="VEuPathDB" id="HostDB:ENSBTAG00000012442"/>
<dbReference type="VGNC" id="VGNC:27813">
    <property type="gene designation" value="CTSB"/>
</dbReference>
<dbReference type="eggNOG" id="KOG1543">
    <property type="taxonomic scope" value="Eukaryota"/>
</dbReference>
<dbReference type="GeneTree" id="ENSGT00940000158680"/>
<dbReference type="HOGENOM" id="CLU_012184_3_3_1"/>
<dbReference type="InParanoid" id="P07688"/>
<dbReference type="OMA" id="YFDEAGC"/>
<dbReference type="OrthoDB" id="640249at2759"/>
<dbReference type="TreeFam" id="TF314576"/>
<dbReference type="BRENDA" id="3.4.22.1">
    <property type="organism ID" value="908"/>
</dbReference>
<dbReference type="Reactome" id="R-BTA-1442490">
    <property type="pathway name" value="Collagen degradation"/>
</dbReference>
<dbReference type="Reactome" id="R-BTA-1679131">
    <property type="pathway name" value="Trafficking and processing of endosomal TLR"/>
</dbReference>
<dbReference type="Reactome" id="R-BTA-2132295">
    <property type="pathway name" value="MHC class II antigen presentation"/>
</dbReference>
<dbReference type="Reactome" id="R-BTA-6798695">
    <property type="pathway name" value="Neutrophil degranulation"/>
</dbReference>
<dbReference type="EvolutionaryTrace" id="P07688"/>
<dbReference type="PRO" id="PR:P07688"/>
<dbReference type="Proteomes" id="UP000009136">
    <property type="component" value="Chromosome 8"/>
</dbReference>
<dbReference type="Bgee" id="ENSBTAG00000012442">
    <property type="expression patterns" value="Expressed in monocyte and 107 other cell types or tissues"/>
</dbReference>
<dbReference type="GO" id="GO:0016324">
    <property type="term" value="C:apical plasma membrane"/>
    <property type="evidence" value="ECO:0007669"/>
    <property type="project" value="UniProtKB-SubCell"/>
</dbReference>
<dbReference type="GO" id="GO:0005615">
    <property type="term" value="C:extracellular space"/>
    <property type="evidence" value="ECO:0000318"/>
    <property type="project" value="GO_Central"/>
</dbReference>
<dbReference type="GO" id="GO:0005764">
    <property type="term" value="C:lysosome"/>
    <property type="evidence" value="ECO:0000318"/>
    <property type="project" value="GO_Central"/>
</dbReference>
<dbReference type="GO" id="GO:0042470">
    <property type="term" value="C:melanosome"/>
    <property type="evidence" value="ECO:0007669"/>
    <property type="project" value="UniProtKB-SubCell"/>
</dbReference>
<dbReference type="GO" id="GO:0004197">
    <property type="term" value="F:cysteine-type endopeptidase activity"/>
    <property type="evidence" value="ECO:0000318"/>
    <property type="project" value="GO_Central"/>
</dbReference>
<dbReference type="GO" id="GO:0004175">
    <property type="term" value="F:endopeptidase activity"/>
    <property type="evidence" value="ECO:0000250"/>
    <property type="project" value="UniProtKB"/>
</dbReference>
<dbReference type="GO" id="GO:0051603">
    <property type="term" value="P:proteolysis involved in protein catabolic process"/>
    <property type="evidence" value="ECO:0000318"/>
    <property type="project" value="GO_Central"/>
</dbReference>
<dbReference type="CDD" id="cd02620">
    <property type="entry name" value="Peptidase_C1A_CathepsinB"/>
    <property type="match status" value="1"/>
</dbReference>
<dbReference type="FunFam" id="3.90.70.10:FF:000031">
    <property type="entry name" value="Cathepsin B"/>
    <property type="match status" value="1"/>
</dbReference>
<dbReference type="Gene3D" id="3.90.70.10">
    <property type="entry name" value="Cysteine proteinases"/>
    <property type="match status" value="1"/>
</dbReference>
<dbReference type="InterPro" id="IPR038765">
    <property type="entry name" value="Papain-like_cys_pep_sf"/>
</dbReference>
<dbReference type="InterPro" id="IPR025661">
    <property type="entry name" value="Pept_asp_AS"/>
</dbReference>
<dbReference type="InterPro" id="IPR000169">
    <property type="entry name" value="Pept_cys_AS"/>
</dbReference>
<dbReference type="InterPro" id="IPR025660">
    <property type="entry name" value="Pept_his_AS"/>
</dbReference>
<dbReference type="InterPro" id="IPR013128">
    <property type="entry name" value="Peptidase_C1A"/>
</dbReference>
<dbReference type="InterPro" id="IPR000668">
    <property type="entry name" value="Peptidase_C1A_C"/>
</dbReference>
<dbReference type="InterPro" id="IPR012599">
    <property type="entry name" value="Propeptide_C1A"/>
</dbReference>
<dbReference type="PANTHER" id="PTHR12411">
    <property type="entry name" value="CYSTEINE PROTEASE FAMILY C1-RELATED"/>
    <property type="match status" value="1"/>
</dbReference>
<dbReference type="Pfam" id="PF00112">
    <property type="entry name" value="Peptidase_C1"/>
    <property type="match status" value="1"/>
</dbReference>
<dbReference type="Pfam" id="PF08127">
    <property type="entry name" value="Propeptide_C1"/>
    <property type="match status" value="1"/>
</dbReference>
<dbReference type="PRINTS" id="PR00705">
    <property type="entry name" value="PAPAIN"/>
</dbReference>
<dbReference type="SMART" id="SM00645">
    <property type="entry name" value="Pept_C1"/>
    <property type="match status" value="1"/>
</dbReference>
<dbReference type="SUPFAM" id="SSF54001">
    <property type="entry name" value="Cysteine proteinases"/>
    <property type="match status" value="1"/>
</dbReference>
<dbReference type="PROSITE" id="PS00640">
    <property type="entry name" value="THIOL_PROTEASE_ASN"/>
    <property type="match status" value="1"/>
</dbReference>
<dbReference type="PROSITE" id="PS00139">
    <property type="entry name" value="THIOL_PROTEASE_CYS"/>
    <property type="match status" value="1"/>
</dbReference>
<dbReference type="PROSITE" id="PS00639">
    <property type="entry name" value="THIOL_PROTEASE_HIS"/>
    <property type="match status" value="1"/>
</dbReference>
<sequence>MWRLLATLSCLLVLTSARSSLYFPPLSDELVNFVNKQNTTWKAGHNFYNVDLSYVKKLCGAILGGPKLPQRDAFAADVVLPESFDAREQWPNCPTIKEIRDQGSCGSCWAFGAVEAISDRICIHSNGRVNVEVSAEDMLTCCGGECGDGCNGGFPSGAWNFWTKKGLVSGGLYNSHVGCRPYSIPPCEHHVNGSRPPCTGEGDTPKCSKTCEPGYSPSYKEDKHFGCSSYSVANNEKEIMAEIYKNGPVEGAFSVYSDFLLYKSGVYQHVSGEIMGGHAIRILGWGVENGTPYWLVGNSWNTDWGDNGFFKILRGQDHCGIESEIVAGMPCTHQY</sequence>
<name>CATB_BOVIN</name>
<accession>P07688</accession>
<accession>Q3ZC03</accession>